<keyword id="KW-0004">4Fe-4S</keyword>
<keyword id="KW-0408">Iron</keyword>
<keyword id="KW-0411">Iron-sulfur</keyword>
<keyword id="KW-0479">Metal-binding</keyword>
<keyword id="KW-0560">Oxidoreductase</keyword>
<keyword id="KW-0949">S-adenosyl-L-methionine</keyword>
<feature type="chain" id="PRO_0000403685" description="4-hydroxyphenylacetate decarboxylase activating enzyme">
    <location>
        <begin position="1"/>
        <end position="316"/>
    </location>
</feature>
<feature type="domain" description="Radical SAM core" evidence="6">
    <location>
        <begin position="20"/>
        <end position="307"/>
    </location>
</feature>
<feature type="domain" description="4Fe-4S ferredoxin-type" evidence="5">
    <location>
        <begin position="84"/>
        <end position="115"/>
    </location>
</feature>
<feature type="binding site" evidence="1">
    <location>
        <position position="34"/>
    </location>
    <ligand>
        <name>[4Fe-4S] cluster</name>
        <dbReference type="ChEBI" id="CHEBI:49883"/>
        <label>1</label>
        <note>4Fe-4S-S-AdoMet</note>
    </ligand>
</feature>
<feature type="binding site" evidence="1">
    <location>
        <position position="38"/>
    </location>
    <ligand>
        <name>[4Fe-4S] cluster</name>
        <dbReference type="ChEBI" id="CHEBI:49883"/>
        <label>1</label>
        <note>4Fe-4S-S-AdoMet</note>
    </ligand>
</feature>
<feature type="binding site" evidence="1">
    <location>
        <begin position="40"/>
        <end position="42"/>
    </location>
    <ligand>
        <name>S-adenosyl-L-methionine</name>
        <dbReference type="ChEBI" id="CHEBI:59789"/>
    </ligand>
</feature>
<feature type="binding site" evidence="1">
    <location>
        <position position="41"/>
    </location>
    <ligand>
        <name>[4Fe-4S] cluster</name>
        <dbReference type="ChEBI" id="CHEBI:49883"/>
        <label>1</label>
        <note>4Fe-4S-S-AdoMet</note>
    </ligand>
</feature>
<feature type="binding site" evidence="2">
    <location>
        <position position="60"/>
    </location>
    <ligand>
        <name>[4Fe-4S] cluster</name>
        <dbReference type="ChEBI" id="CHEBI:49883"/>
        <label>2</label>
    </ligand>
</feature>
<feature type="binding site" evidence="2">
    <location>
        <position position="66"/>
    </location>
    <ligand>
        <name>[4Fe-4S] cluster</name>
        <dbReference type="ChEBI" id="CHEBI:49883"/>
        <label>2</label>
    </ligand>
</feature>
<feature type="binding site" evidence="2">
    <location>
        <position position="69"/>
    </location>
    <ligand>
        <name>[4Fe-4S] cluster</name>
        <dbReference type="ChEBI" id="CHEBI:49883"/>
        <label>2</label>
    </ligand>
</feature>
<feature type="binding site" evidence="2">
    <location>
        <position position="105"/>
    </location>
    <ligand>
        <name>[4Fe-4S] cluster</name>
        <dbReference type="ChEBI" id="CHEBI:49883"/>
        <label>2</label>
    </ligand>
</feature>
<feature type="binding site" evidence="1">
    <location>
        <position position="144"/>
    </location>
    <ligand>
        <name>S-adenosyl-L-methionine</name>
        <dbReference type="ChEBI" id="CHEBI:59789"/>
    </ligand>
</feature>
<feature type="binding site" evidence="1">
    <location>
        <begin position="193"/>
        <end position="195"/>
    </location>
    <ligand>
        <name>S-adenosyl-L-methionine</name>
        <dbReference type="ChEBI" id="CHEBI:59789"/>
    </ligand>
</feature>
<feature type="binding site" evidence="1">
    <location>
        <position position="267"/>
    </location>
    <ligand>
        <name>S-adenosyl-L-methionine</name>
        <dbReference type="ChEBI" id="CHEBI:59789"/>
    </ligand>
</feature>
<reference key="1">
    <citation type="journal article" date="2004" name="Eur. J. Biochem.">
        <title>Subunit composition of the glycyl radical enzyme p-hydroxyphenylacetate decarboxylase. A small subunit, HpdC, is essential for catalytic activity.</title>
        <authorList>
            <person name="Andrei P.I."/>
            <person name="Pierik A.J."/>
            <person name="Zauner S."/>
            <person name="Andrei-Selmer L.C."/>
            <person name="Selmer T."/>
        </authorList>
    </citation>
    <scope>NUCLEOTIDE SEQUENCE [GENOMIC DNA]</scope>
    <scope>FUNCTION</scope>
    <scope>COFACTOR</scope>
    <scope>SUBUNIT</scope>
    <source>
        <strain evidence="13">ATCC 9689 / DSM 1296 / BCRC 10642 / JCM 1296 / NCIMB 10666 / NCTC 11209 / 90556-M6S</strain>
    </source>
</reference>
<reference key="2">
    <citation type="journal article" date="2006" name="Biochemistry">
        <title>4-Hydroxyphenylacetate decarboxylases: properties of a novel subclass of glycyl radical enzyme systems.</title>
        <authorList>
            <person name="Yu L."/>
            <person name="Blaser M."/>
            <person name="Andrei P.I."/>
            <person name="Pierik A.J."/>
            <person name="Selmer T."/>
        </authorList>
    </citation>
    <scope>FUNCTION</scope>
    <scope>COFACTOR</scope>
    <scope>SUBUNIT</scope>
    <source>
        <strain evidence="8">ATCC 9689 / DSM 1296 / BCRC 10642 / JCM 1296 / NCIMB 10666 / NCTC 11209 / 90556-M6S</strain>
    </source>
</reference>
<sequence>MSSQKQLEGMIFDVQSFSVHDGPGCRTTVFLNGCPLSCKWCANPESWTVRPHMMFSELSCQYENGCTVCHGKCKNGALSFNLDNKPVIDWNICKDCESFECVNSCYYNAFKLCAKPYTVDELVQVIKRDSNNWRSNGGVTFSGGEPLLQHEFLHEVLLKCHEVNVHTAIETSACVSNEVFNKIFNDIDFAFIDIKHMDREKHKEQTGVYNDLILENISNLANSDWNGRLVLRVPVISGFNDSDENISDIISFMHKNNLVEINLLPFHRLGESKWTQLGKEYEYSDKGDVDEGHLEELQDIFLDNGIACYVGHVTAF</sequence>
<protein>
    <recommendedName>
        <fullName evidence="9">4-hydroxyphenylacetate decarboxylase activating enzyme</fullName>
        <shortName evidence="9">Hpd-AE</shortName>
        <ecNumber evidence="11 12">1.97.1.-</ecNumber>
    </recommendedName>
</protein>
<gene>
    <name evidence="13" type="primary">hpdA</name>
</gene>
<name>HPDA_CLODI</name>
<proteinExistence type="evidence at protein level"/>
<dbReference type="EC" id="1.97.1.-" evidence="11 12"/>
<dbReference type="EMBL" id="AJ543427">
    <property type="protein sequence ID" value="CAD65891.1"/>
    <property type="molecule type" value="Genomic_DNA"/>
</dbReference>
<dbReference type="SMR" id="Q84F14"/>
<dbReference type="BRENDA" id="4.1.1.83">
    <property type="organism ID" value="1473"/>
</dbReference>
<dbReference type="GO" id="GO:0051539">
    <property type="term" value="F:4 iron, 4 sulfur cluster binding"/>
    <property type="evidence" value="ECO:0007669"/>
    <property type="project" value="UniProtKB-KW"/>
</dbReference>
<dbReference type="GO" id="GO:0046872">
    <property type="term" value="F:metal ion binding"/>
    <property type="evidence" value="ECO:0007669"/>
    <property type="project" value="UniProtKB-KW"/>
</dbReference>
<dbReference type="GO" id="GO:0016491">
    <property type="term" value="F:oxidoreductase activity"/>
    <property type="evidence" value="ECO:0007669"/>
    <property type="project" value="UniProtKB-KW"/>
</dbReference>
<dbReference type="Gene3D" id="3.20.20.70">
    <property type="entry name" value="Aldolase class I"/>
    <property type="match status" value="1"/>
</dbReference>
<dbReference type="InterPro" id="IPR034438">
    <property type="entry name" value="4-hPhe_decarboxylase_activase"/>
</dbReference>
<dbReference type="InterPro" id="IPR017896">
    <property type="entry name" value="4Fe4S_Fe-S-bd"/>
</dbReference>
<dbReference type="InterPro" id="IPR013785">
    <property type="entry name" value="Aldolase_TIM"/>
</dbReference>
<dbReference type="InterPro" id="IPR040074">
    <property type="entry name" value="BssD/PflA/YjjW"/>
</dbReference>
<dbReference type="InterPro" id="IPR034457">
    <property type="entry name" value="Organic_radical-activating"/>
</dbReference>
<dbReference type="InterPro" id="IPR012839">
    <property type="entry name" value="Organic_radical_activase"/>
</dbReference>
<dbReference type="InterPro" id="IPR001989">
    <property type="entry name" value="Radical_activat_CS"/>
</dbReference>
<dbReference type="InterPro" id="IPR007197">
    <property type="entry name" value="rSAM"/>
</dbReference>
<dbReference type="NCBIfam" id="NF033717">
    <property type="entry name" value="HPDL_rSAM_activ"/>
    <property type="match status" value="1"/>
</dbReference>
<dbReference type="NCBIfam" id="TIGR02494">
    <property type="entry name" value="PFLE_PFLC"/>
    <property type="match status" value="1"/>
</dbReference>
<dbReference type="PANTHER" id="PTHR30352:SF4">
    <property type="entry name" value="PYRUVATE FORMATE-LYASE 2-ACTIVATING ENZYME"/>
    <property type="match status" value="1"/>
</dbReference>
<dbReference type="PANTHER" id="PTHR30352">
    <property type="entry name" value="PYRUVATE FORMATE-LYASE-ACTIVATING ENZYME"/>
    <property type="match status" value="1"/>
</dbReference>
<dbReference type="Pfam" id="PF13353">
    <property type="entry name" value="Fer4_12"/>
    <property type="match status" value="1"/>
</dbReference>
<dbReference type="Pfam" id="PF04055">
    <property type="entry name" value="Radical_SAM"/>
    <property type="match status" value="1"/>
</dbReference>
<dbReference type="PIRSF" id="PIRSF000371">
    <property type="entry name" value="PFL_act_enz"/>
    <property type="match status" value="1"/>
</dbReference>
<dbReference type="SFLD" id="SFLDF00279">
    <property type="entry name" value="4-hydroxyphenylacetate_decarbo"/>
    <property type="match status" value="1"/>
</dbReference>
<dbReference type="SFLD" id="SFLDG01118">
    <property type="entry name" value="activating_enzymes__group_2"/>
    <property type="match status" value="1"/>
</dbReference>
<dbReference type="SFLD" id="SFLDS00029">
    <property type="entry name" value="Radical_SAM"/>
    <property type="match status" value="1"/>
</dbReference>
<dbReference type="SUPFAM" id="SSF54862">
    <property type="entry name" value="4Fe-4S ferredoxins"/>
    <property type="match status" value="1"/>
</dbReference>
<dbReference type="SUPFAM" id="SSF102114">
    <property type="entry name" value="Radical SAM enzymes"/>
    <property type="match status" value="1"/>
</dbReference>
<dbReference type="PROSITE" id="PS51379">
    <property type="entry name" value="4FE4S_FER_2"/>
    <property type="match status" value="1"/>
</dbReference>
<dbReference type="PROSITE" id="PS01087">
    <property type="entry name" value="RADICAL_ACTIVATING"/>
    <property type="match status" value="1"/>
</dbReference>
<dbReference type="PROSITE" id="PS51918">
    <property type="entry name" value="RADICAL_SAM"/>
    <property type="match status" value="1"/>
</dbReference>
<comment type="function">
    <text evidence="3 7 8">Catalyzes activation of 4-hydroxyphenylacetate decarboxylase under anaerobic conditions by generation of an organic free radical on a glycine residue, via a homolytic cleavage of S-adenosyl-L-methionine (SAM).</text>
</comment>
<comment type="catalytic activity">
    <reaction evidence="11 12">
        <text>glycyl-[protein] + reduced [flavodoxin] + S-adenosyl-L-methionine = glycin-2-yl radical-[protein] + semiquinone [flavodoxin] + 5'-deoxyadenosine + L-methionine + H(+)</text>
        <dbReference type="Rhea" id="RHEA:61976"/>
        <dbReference type="Rhea" id="RHEA-COMP:10622"/>
        <dbReference type="Rhea" id="RHEA-COMP:14480"/>
        <dbReference type="Rhea" id="RHEA-COMP:15993"/>
        <dbReference type="Rhea" id="RHEA-COMP:15994"/>
        <dbReference type="ChEBI" id="CHEBI:15378"/>
        <dbReference type="ChEBI" id="CHEBI:17319"/>
        <dbReference type="ChEBI" id="CHEBI:29947"/>
        <dbReference type="ChEBI" id="CHEBI:32722"/>
        <dbReference type="ChEBI" id="CHEBI:57618"/>
        <dbReference type="ChEBI" id="CHEBI:57844"/>
        <dbReference type="ChEBI" id="CHEBI:59789"/>
        <dbReference type="ChEBI" id="CHEBI:140311"/>
    </reaction>
</comment>
<comment type="cofactor">
    <cofactor evidence="7 8">
        <name>[4Fe-4S] cluster</name>
        <dbReference type="ChEBI" id="CHEBI:49883"/>
    </cofactor>
    <text evidence="7 8 10">Binds 2 [4Fe-4S] clusters. One cluster is coordinated with 3 cysteines and an exchangeable S-adenosyl-L-methionine (Probable).</text>
</comment>
<comment type="subunit">
    <text evidence="7 8">Monomer.</text>
</comment>
<comment type="similarity">
    <text evidence="4">Belongs to the organic radical-activating enzymes family.</text>
</comment>
<accession>Q84F14</accession>
<evidence type="ECO:0000250" key="1">
    <source>
        <dbReference type="UniProtKB" id="P0A9N4"/>
    </source>
</evidence>
<evidence type="ECO:0000250" key="2">
    <source>
        <dbReference type="UniProtKB" id="Q30W71"/>
    </source>
</evidence>
<evidence type="ECO:0000250" key="3">
    <source>
        <dbReference type="UniProtKB" id="Q46267"/>
    </source>
</evidence>
<evidence type="ECO:0000255" key="4"/>
<evidence type="ECO:0000255" key="5">
    <source>
        <dbReference type="PROSITE-ProRule" id="PRU00711"/>
    </source>
</evidence>
<evidence type="ECO:0000255" key="6">
    <source>
        <dbReference type="PROSITE-ProRule" id="PRU01266"/>
    </source>
</evidence>
<evidence type="ECO:0000269" key="7">
    <source>
    </source>
</evidence>
<evidence type="ECO:0000269" key="8">
    <source>
    </source>
</evidence>
<evidence type="ECO:0000303" key="9">
    <source>
    </source>
</evidence>
<evidence type="ECO:0000305" key="10"/>
<evidence type="ECO:0000305" key="11">
    <source>
    </source>
</evidence>
<evidence type="ECO:0000305" key="12">
    <source>
    </source>
</evidence>
<evidence type="ECO:0000312" key="13">
    <source>
        <dbReference type="EMBL" id="CAD65891.1"/>
    </source>
</evidence>
<organism>
    <name type="scientific">Clostridioides difficile</name>
    <name type="common">Peptoclostridium difficile</name>
    <dbReference type="NCBI Taxonomy" id="1496"/>
    <lineage>
        <taxon>Bacteria</taxon>
        <taxon>Bacillati</taxon>
        <taxon>Bacillota</taxon>
        <taxon>Clostridia</taxon>
        <taxon>Peptostreptococcales</taxon>
        <taxon>Peptostreptococcaceae</taxon>
        <taxon>Clostridioides</taxon>
    </lineage>
</organism>